<organism>
    <name type="scientific">Haemophilus influenzae (strain PittEE)</name>
    <dbReference type="NCBI Taxonomy" id="374930"/>
    <lineage>
        <taxon>Bacteria</taxon>
        <taxon>Pseudomonadati</taxon>
        <taxon>Pseudomonadota</taxon>
        <taxon>Gammaproteobacteria</taxon>
        <taxon>Pasteurellales</taxon>
        <taxon>Pasteurellaceae</taxon>
        <taxon>Haemophilus</taxon>
    </lineage>
</organism>
<protein>
    <recommendedName>
        <fullName evidence="1">DNA mismatch repair protein MutL</fullName>
    </recommendedName>
</protein>
<evidence type="ECO:0000255" key="1">
    <source>
        <dbReference type="HAMAP-Rule" id="MF_00149"/>
    </source>
</evidence>
<evidence type="ECO:0000256" key="2">
    <source>
        <dbReference type="SAM" id="MobiDB-lite"/>
    </source>
</evidence>
<gene>
    <name evidence="1" type="primary">mutL</name>
    <name type="ordered locus">CGSHiEE_02960</name>
</gene>
<dbReference type="EMBL" id="CP000671">
    <property type="protein sequence ID" value="ABQ98022.1"/>
    <property type="molecule type" value="Genomic_DNA"/>
</dbReference>
<dbReference type="SMR" id="A5UB71"/>
<dbReference type="KEGG" id="hip:CGSHiEE_02960"/>
<dbReference type="HOGENOM" id="CLU_004131_5_1_6"/>
<dbReference type="GO" id="GO:0032300">
    <property type="term" value="C:mismatch repair complex"/>
    <property type="evidence" value="ECO:0007669"/>
    <property type="project" value="InterPro"/>
</dbReference>
<dbReference type="GO" id="GO:0005524">
    <property type="term" value="F:ATP binding"/>
    <property type="evidence" value="ECO:0007669"/>
    <property type="project" value="InterPro"/>
</dbReference>
<dbReference type="GO" id="GO:0016887">
    <property type="term" value="F:ATP hydrolysis activity"/>
    <property type="evidence" value="ECO:0007669"/>
    <property type="project" value="InterPro"/>
</dbReference>
<dbReference type="GO" id="GO:0140664">
    <property type="term" value="F:ATP-dependent DNA damage sensor activity"/>
    <property type="evidence" value="ECO:0007669"/>
    <property type="project" value="InterPro"/>
</dbReference>
<dbReference type="GO" id="GO:0030983">
    <property type="term" value="F:mismatched DNA binding"/>
    <property type="evidence" value="ECO:0007669"/>
    <property type="project" value="InterPro"/>
</dbReference>
<dbReference type="GO" id="GO:0006298">
    <property type="term" value="P:mismatch repair"/>
    <property type="evidence" value="ECO:0007669"/>
    <property type="project" value="UniProtKB-UniRule"/>
</dbReference>
<dbReference type="CDD" id="cd16926">
    <property type="entry name" value="HATPase_MutL-MLH-PMS-like"/>
    <property type="match status" value="1"/>
</dbReference>
<dbReference type="CDD" id="cd03482">
    <property type="entry name" value="MutL_Trans_MutL"/>
    <property type="match status" value="1"/>
</dbReference>
<dbReference type="FunFam" id="3.30.230.10:FF:000013">
    <property type="entry name" value="DNA mismatch repair endonuclease MutL"/>
    <property type="match status" value="1"/>
</dbReference>
<dbReference type="FunFam" id="3.30.565.10:FF:000003">
    <property type="entry name" value="DNA mismatch repair endonuclease MutL"/>
    <property type="match status" value="1"/>
</dbReference>
<dbReference type="Gene3D" id="3.30.230.10">
    <property type="match status" value="1"/>
</dbReference>
<dbReference type="Gene3D" id="3.30.565.10">
    <property type="entry name" value="Histidine kinase-like ATPase, C-terminal domain"/>
    <property type="match status" value="1"/>
</dbReference>
<dbReference type="Gene3D" id="3.30.1540.20">
    <property type="entry name" value="MutL, C-terminal domain, dimerisation subdomain"/>
    <property type="match status" value="1"/>
</dbReference>
<dbReference type="Gene3D" id="3.30.1370.100">
    <property type="entry name" value="MutL, C-terminal domain, regulatory subdomain"/>
    <property type="match status" value="1"/>
</dbReference>
<dbReference type="HAMAP" id="MF_00149">
    <property type="entry name" value="DNA_mis_repair"/>
    <property type="match status" value="1"/>
</dbReference>
<dbReference type="InterPro" id="IPR014762">
    <property type="entry name" value="DNA_mismatch_repair_CS"/>
</dbReference>
<dbReference type="InterPro" id="IPR020667">
    <property type="entry name" value="DNA_mismatch_repair_MutL"/>
</dbReference>
<dbReference type="InterPro" id="IPR013507">
    <property type="entry name" value="DNA_mismatch_S5_2-like"/>
</dbReference>
<dbReference type="InterPro" id="IPR036890">
    <property type="entry name" value="HATPase_C_sf"/>
</dbReference>
<dbReference type="InterPro" id="IPR002099">
    <property type="entry name" value="MutL/Mlh/PMS"/>
</dbReference>
<dbReference type="InterPro" id="IPR038973">
    <property type="entry name" value="MutL/Mlh/Pms-like"/>
</dbReference>
<dbReference type="InterPro" id="IPR014790">
    <property type="entry name" value="MutL_C"/>
</dbReference>
<dbReference type="InterPro" id="IPR042120">
    <property type="entry name" value="MutL_C_dimsub"/>
</dbReference>
<dbReference type="InterPro" id="IPR042121">
    <property type="entry name" value="MutL_C_regsub"/>
</dbReference>
<dbReference type="InterPro" id="IPR037198">
    <property type="entry name" value="MutL_C_sf"/>
</dbReference>
<dbReference type="InterPro" id="IPR020568">
    <property type="entry name" value="Ribosomal_Su5_D2-typ_SF"/>
</dbReference>
<dbReference type="InterPro" id="IPR014721">
    <property type="entry name" value="Ribsml_uS5_D2-typ_fold_subgr"/>
</dbReference>
<dbReference type="NCBIfam" id="TIGR00585">
    <property type="entry name" value="mutl"/>
    <property type="match status" value="1"/>
</dbReference>
<dbReference type="NCBIfam" id="NF000948">
    <property type="entry name" value="PRK00095.1-1"/>
    <property type="match status" value="1"/>
</dbReference>
<dbReference type="PANTHER" id="PTHR10073">
    <property type="entry name" value="DNA MISMATCH REPAIR PROTEIN MLH, PMS, MUTL"/>
    <property type="match status" value="1"/>
</dbReference>
<dbReference type="PANTHER" id="PTHR10073:SF12">
    <property type="entry name" value="DNA MISMATCH REPAIR PROTEIN MLH1"/>
    <property type="match status" value="1"/>
</dbReference>
<dbReference type="Pfam" id="PF01119">
    <property type="entry name" value="DNA_mis_repair"/>
    <property type="match status" value="1"/>
</dbReference>
<dbReference type="Pfam" id="PF13589">
    <property type="entry name" value="HATPase_c_3"/>
    <property type="match status" value="1"/>
</dbReference>
<dbReference type="Pfam" id="PF08676">
    <property type="entry name" value="MutL_C"/>
    <property type="match status" value="1"/>
</dbReference>
<dbReference type="SMART" id="SM01340">
    <property type="entry name" value="DNA_mis_repair"/>
    <property type="match status" value="1"/>
</dbReference>
<dbReference type="SMART" id="SM00853">
    <property type="entry name" value="MutL_C"/>
    <property type="match status" value="1"/>
</dbReference>
<dbReference type="SUPFAM" id="SSF55874">
    <property type="entry name" value="ATPase domain of HSP90 chaperone/DNA topoisomerase II/histidine kinase"/>
    <property type="match status" value="1"/>
</dbReference>
<dbReference type="SUPFAM" id="SSF118116">
    <property type="entry name" value="DNA mismatch repair protein MutL"/>
    <property type="match status" value="1"/>
</dbReference>
<dbReference type="SUPFAM" id="SSF54211">
    <property type="entry name" value="Ribosomal protein S5 domain 2-like"/>
    <property type="match status" value="1"/>
</dbReference>
<dbReference type="PROSITE" id="PS00058">
    <property type="entry name" value="DNA_MISMATCH_REPAIR_1"/>
    <property type="match status" value="1"/>
</dbReference>
<keyword id="KW-0227">DNA damage</keyword>
<keyword id="KW-0234">DNA repair</keyword>
<name>MUTL_HAEIE</name>
<comment type="function">
    <text evidence="1">This protein is involved in the repair of mismatches in DNA. It is required for dam-dependent methyl-directed DNA mismatch repair. May act as a 'molecular matchmaker', a protein that promotes the formation of a stable complex between two or more DNA-binding proteins in an ATP-dependent manner without itself being part of a final effector complex.</text>
</comment>
<comment type="similarity">
    <text evidence="1">Belongs to the DNA mismatch repair MutL/HexB family.</text>
</comment>
<reference key="1">
    <citation type="journal article" date="2007" name="Genome Biol.">
        <title>Characterization and modeling of the Haemophilus influenzae core and supragenomes based on the complete genomic sequences of Rd and 12 clinical nontypeable strains.</title>
        <authorList>
            <person name="Hogg J.S."/>
            <person name="Hu F.Z."/>
            <person name="Janto B."/>
            <person name="Boissy R."/>
            <person name="Hayes J."/>
            <person name="Keefe R."/>
            <person name="Post J.C."/>
            <person name="Ehrlich G.D."/>
        </authorList>
    </citation>
    <scope>NUCLEOTIDE SEQUENCE [LARGE SCALE GENOMIC DNA]</scope>
    <source>
        <strain>PittEE</strain>
    </source>
</reference>
<proteinExistence type="inferred from homology"/>
<sequence>MPIRILSPQLANQIAAGEVVERPASVVKELVENSLDAGANKIQIDIENGGANLIRIRDNGCGIPKEELSLALARHATSKIADLDDLEAILSLGFRGEALASISSVSRLTLTSRTEEQTEAWQVYAQGRDMETTIKPASHPVGTTVEVANLFFNTPARRKFLRTDKTEFAHIDEVIRRIALTKFNTAFTLTHNGKIVRQYRPAFDLNQQLKRVAVICGDDFVKNALRIDWKHDDLHLSGWVATPNFSRTQNDLSYCYINGRMVRDKVISHAIRQAYAQYLPTDAYPAFVLFIDLNPHDVDVNVHPTKHEVRFHQQRLIHDFIYEGISYALNNQEQLNWHTEQSAVENHEENTVREPQPNYSIRPNRAAAGQNSFAPQYHEKPQQNQPHFSNTPVLPNHVSTGYRDYRSDAPSKTEQRLYAELLRTLPPTAQKDISNTAQQNISDTAKIISTEIIECSSHLRALSLIENRALLLQQNQDFFLLSLEKLQRLQWQLALQQIQIEQQPLLIPIVFRLTEAQFQAWQQYSDNFKKIGFEFIENQAQLRLTLNKVPNVLRTQNLQKCVMAMLTRDENSSPFLTALCAQLECKTFDALADALNLLSETERLLTQTNRTAFTQLLKPVNWQPLLDEI</sequence>
<accession>A5UB71</accession>
<feature type="chain" id="PRO_1000010021" description="DNA mismatch repair protein MutL">
    <location>
        <begin position="1"/>
        <end position="629"/>
    </location>
</feature>
<feature type="region of interest" description="Disordered" evidence="2">
    <location>
        <begin position="376"/>
        <end position="396"/>
    </location>
</feature>
<feature type="compositionally biased region" description="Polar residues" evidence="2">
    <location>
        <begin position="382"/>
        <end position="396"/>
    </location>
</feature>